<accession>Q0BJ21</accession>
<feature type="chain" id="PRO_0000293454" description="Small ribosomal subunit protein uS4">
    <location>
        <begin position="1"/>
        <end position="207"/>
    </location>
</feature>
<feature type="domain" description="S4 RNA-binding" evidence="1">
    <location>
        <begin position="97"/>
        <end position="160"/>
    </location>
</feature>
<feature type="region of interest" description="Disordered" evidence="2">
    <location>
        <begin position="31"/>
        <end position="55"/>
    </location>
</feature>
<feature type="compositionally biased region" description="Polar residues" evidence="2">
    <location>
        <begin position="42"/>
        <end position="53"/>
    </location>
</feature>
<protein>
    <recommendedName>
        <fullName evidence="1">Small ribosomal subunit protein uS4</fullName>
    </recommendedName>
    <alternativeName>
        <fullName evidence="3">30S ribosomal protein S4</fullName>
    </alternativeName>
</protein>
<evidence type="ECO:0000255" key="1">
    <source>
        <dbReference type="HAMAP-Rule" id="MF_01306"/>
    </source>
</evidence>
<evidence type="ECO:0000256" key="2">
    <source>
        <dbReference type="SAM" id="MobiDB-lite"/>
    </source>
</evidence>
<evidence type="ECO:0000305" key="3"/>
<organism>
    <name type="scientific">Burkholderia ambifaria (strain ATCC BAA-244 / DSM 16087 / CCUG 44356 / LMG 19182 / AMMD)</name>
    <name type="common">Burkholderia cepacia (strain AMMD)</name>
    <dbReference type="NCBI Taxonomy" id="339670"/>
    <lineage>
        <taxon>Bacteria</taxon>
        <taxon>Pseudomonadati</taxon>
        <taxon>Pseudomonadota</taxon>
        <taxon>Betaproteobacteria</taxon>
        <taxon>Burkholderiales</taxon>
        <taxon>Burkholderiaceae</taxon>
        <taxon>Burkholderia</taxon>
        <taxon>Burkholderia cepacia complex</taxon>
    </lineage>
</organism>
<reference key="1">
    <citation type="submission" date="2006-08" db="EMBL/GenBank/DDBJ databases">
        <title>Complete sequence of chromosome 1 of Burkholderia cepacia AMMD.</title>
        <authorList>
            <person name="Copeland A."/>
            <person name="Lucas S."/>
            <person name="Lapidus A."/>
            <person name="Barry K."/>
            <person name="Detter J.C."/>
            <person name="Glavina del Rio T."/>
            <person name="Hammon N."/>
            <person name="Israni S."/>
            <person name="Pitluck S."/>
            <person name="Bruce D."/>
            <person name="Chain P."/>
            <person name="Malfatti S."/>
            <person name="Shin M."/>
            <person name="Vergez L."/>
            <person name="Schmutz J."/>
            <person name="Larimer F."/>
            <person name="Land M."/>
            <person name="Hauser L."/>
            <person name="Kyrpides N."/>
            <person name="Kim E."/>
            <person name="Parke J."/>
            <person name="Coenye T."/>
            <person name="Konstantinidis K."/>
            <person name="Ramette A."/>
            <person name="Tiedje J."/>
            <person name="Richardson P."/>
        </authorList>
    </citation>
    <scope>NUCLEOTIDE SEQUENCE [LARGE SCALE GENOMIC DNA]</scope>
    <source>
        <strain>ATCC BAA-244 / DSM 16087 / CCUG 44356 / LMG 19182 / AMMD</strain>
    </source>
</reference>
<dbReference type="EMBL" id="CP000440">
    <property type="protein sequence ID" value="ABI85852.1"/>
    <property type="status" value="ALT_INIT"/>
    <property type="molecule type" value="Genomic_DNA"/>
</dbReference>
<dbReference type="RefSeq" id="WP_006752934.1">
    <property type="nucleotide sequence ID" value="NZ_CP009798.1"/>
</dbReference>
<dbReference type="SMR" id="Q0BJ21"/>
<dbReference type="GeneID" id="93084293"/>
<dbReference type="KEGG" id="bam:Bamb_0292"/>
<dbReference type="PATRIC" id="fig|339670.21.peg.1328"/>
<dbReference type="eggNOG" id="COG0522">
    <property type="taxonomic scope" value="Bacteria"/>
</dbReference>
<dbReference type="Proteomes" id="UP000000662">
    <property type="component" value="Chromosome 1"/>
</dbReference>
<dbReference type="GO" id="GO:0015935">
    <property type="term" value="C:small ribosomal subunit"/>
    <property type="evidence" value="ECO:0007669"/>
    <property type="project" value="InterPro"/>
</dbReference>
<dbReference type="GO" id="GO:0019843">
    <property type="term" value="F:rRNA binding"/>
    <property type="evidence" value="ECO:0007669"/>
    <property type="project" value="UniProtKB-UniRule"/>
</dbReference>
<dbReference type="GO" id="GO:0003735">
    <property type="term" value="F:structural constituent of ribosome"/>
    <property type="evidence" value="ECO:0007669"/>
    <property type="project" value="InterPro"/>
</dbReference>
<dbReference type="GO" id="GO:0042274">
    <property type="term" value="P:ribosomal small subunit biogenesis"/>
    <property type="evidence" value="ECO:0007669"/>
    <property type="project" value="TreeGrafter"/>
</dbReference>
<dbReference type="GO" id="GO:0006412">
    <property type="term" value="P:translation"/>
    <property type="evidence" value="ECO:0007669"/>
    <property type="project" value="UniProtKB-UniRule"/>
</dbReference>
<dbReference type="CDD" id="cd00165">
    <property type="entry name" value="S4"/>
    <property type="match status" value="1"/>
</dbReference>
<dbReference type="FunFam" id="1.10.1050.10:FF:000001">
    <property type="entry name" value="30S ribosomal protein S4"/>
    <property type="match status" value="1"/>
</dbReference>
<dbReference type="FunFam" id="3.10.290.10:FF:000001">
    <property type="entry name" value="30S ribosomal protein S4"/>
    <property type="match status" value="1"/>
</dbReference>
<dbReference type="Gene3D" id="1.10.1050.10">
    <property type="entry name" value="Ribosomal Protein S4 Delta 41, Chain A, domain 1"/>
    <property type="match status" value="1"/>
</dbReference>
<dbReference type="Gene3D" id="3.10.290.10">
    <property type="entry name" value="RNA-binding S4 domain"/>
    <property type="match status" value="1"/>
</dbReference>
<dbReference type="HAMAP" id="MF_01306_B">
    <property type="entry name" value="Ribosomal_uS4_B"/>
    <property type="match status" value="1"/>
</dbReference>
<dbReference type="InterPro" id="IPR022801">
    <property type="entry name" value="Ribosomal_uS4"/>
</dbReference>
<dbReference type="InterPro" id="IPR005709">
    <property type="entry name" value="Ribosomal_uS4_bac-type"/>
</dbReference>
<dbReference type="InterPro" id="IPR018079">
    <property type="entry name" value="Ribosomal_uS4_CS"/>
</dbReference>
<dbReference type="InterPro" id="IPR001912">
    <property type="entry name" value="Ribosomal_uS4_N"/>
</dbReference>
<dbReference type="InterPro" id="IPR002942">
    <property type="entry name" value="S4_RNA-bd"/>
</dbReference>
<dbReference type="InterPro" id="IPR036986">
    <property type="entry name" value="S4_RNA-bd_sf"/>
</dbReference>
<dbReference type="NCBIfam" id="NF003717">
    <property type="entry name" value="PRK05327.1"/>
    <property type="match status" value="1"/>
</dbReference>
<dbReference type="NCBIfam" id="TIGR01017">
    <property type="entry name" value="rpsD_bact"/>
    <property type="match status" value="1"/>
</dbReference>
<dbReference type="PANTHER" id="PTHR11831">
    <property type="entry name" value="30S 40S RIBOSOMAL PROTEIN"/>
    <property type="match status" value="1"/>
</dbReference>
<dbReference type="PANTHER" id="PTHR11831:SF4">
    <property type="entry name" value="SMALL RIBOSOMAL SUBUNIT PROTEIN US4M"/>
    <property type="match status" value="1"/>
</dbReference>
<dbReference type="Pfam" id="PF00163">
    <property type="entry name" value="Ribosomal_S4"/>
    <property type="match status" value="1"/>
</dbReference>
<dbReference type="Pfam" id="PF01479">
    <property type="entry name" value="S4"/>
    <property type="match status" value="1"/>
</dbReference>
<dbReference type="SMART" id="SM01390">
    <property type="entry name" value="Ribosomal_S4"/>
    <property type="match status" value="1"/>
</dbReference>
<dbReference type="SMART" id="SM00363">
    <property type="entry name" value="S4"/>
    <property type="match status" value="1"/>
</dbReference>
<dbReference type="SUPFAM" id="SSF55174">
    <property type="entry name" value="Alpha-L RNA-binding motif"/>
    <property type="match status" value="1"/>
</dbReference>
<dbReference type="PROSITE" id="PS00632">
    <property type="entry name" value="RIBOSOMAL_S4"/>
    <property type="match status" value="1"/>
</dbReference>
<dbReference type="PROSITE" id="PS50889">
    <property type="entry name" value="S4"/>
    <property type="match status" value="1"/>
</dbReference>
<proteinExistence type="inferred from homology"/>
<keyword id="KW-0687">Ribonucleoprotein</keyword>
<keyword id="KW-0689">Ribosomal protein</keyword>
<keyword id="KW-0694">RNA-binding</keyword>
<keyword id="KW-0699">rRNA-binding</keyword>
<name>RS4_BURCM</name>
<gene>
    <name evidence="1" type="primary">rpsD</name>
    <name type="ordered locus">Bamb_0292</name>
</gene>
<comment type="function">
    <text evidence="1">One of the primary rRNA binding proteins, it binds directly to 16S rRNA where it nucleates assembly of the body of the 30S subunit.</text>
</comment>
<comment type="function">
    <text evidence="1">With S5 and S12 plays an important role in translational accuracy.</text>
</comment>
<comment type="subunit">
    <text evidence="1">Part of the 30S ribosomal subunit. Contacts protein S5. The interaction surface between S4 and S5 is involved in control of translational fidelity.</text>
</comment>
<comment type="similarity">
    <text evidence="1">Belongs to the universal ribosomal protein uS4 family.</text>
</comment>
<comment type="sequence caution" evidence="3">
    <conflict type="erroneous initiation">
        <sequence resource="EMBL-CDS" id="ABI85852"/>
    </conflict>
</comment>
<sequence length="207" mass="23186">MARYIGPKAKLSRREGTDLFLKSARRSLADKCKLDSKPGQHGRTSGARTSDYGTQLREKQKVKRIYGVLERQFRRYFAEADRRKGNTGENLLQLLESRLDNVVYRMGFGSTRAEARQLVSHKSITVNGVVANVPSQQVKAGDIVAIREKAKKQARIVEALSLAEQGGMPSWVAVDAKKFEGTFKQMPERADIAGDINESLIVELYSR</sequence>